<gene>
    <name evidence="18" type="primary">Scnn1b</name>
</gene>
<dbReference type="EMBL" id="X77932">
    <property type="protein sequence ID" value="CAA54904.1"/>
    <property type="molecule type" value="mRNA"/>
</dbReference>
<dbReference type="EMBL" id="U35174">
    <property type="protein sequence ID" value="AAB58457.1"/>
    <property type="molecule type" value="mRNA"/>
</dbReference>
<dbReference type="EMBL" id="U35175">
    <property type="protein sequence ID" value="AAB58458.1"/>
    <property type="molecule type" value="mRNA"/>
</dbReference>
<dbReference type="PIR" id="S41159">
    <property type="entry name" value="S41159"/>
</dbReference>
<dbReference type="RefSeq" id="NP_036780.1">
    <property type="nucleotide sequence ID" value="NM_012648.1"/>
</dbReference>
<dbReference type="PDB" id="1I5H">
    <property type="method" value="NMR"/>
    <property type="chains" value="B=607-621"/>
</dbReference>
<dbReference type="PDBsum" id="1I5H"/>
<dbReference type="SMR" id="P37090"/>
<dbReference type="BioGRID" id="246891">
    <property type="interactions" value="2"/>
</dbReference>
<dbReference type="ComplexPortal" id="CPX-314">
    <property type="entry name" value="Amiloride-sensitive sodium channel complex, alpha-beta-gamma"/>
</dbReference>
<dbReference type="FunCoup" id="P37090">
    <property type="interactions" value="83"/>
</dbReference>
<dbReference type="IntAct" id="P37090">
    <property type="interactions" value="2"/>
</dbReference>
<dbReference type="STRING" id="10116.ENSRNOP00000063755"/>
<dbReference type="CarbonylDB" id="P37090"/>
<dbReference type="GlyCosmos" id="P37090">
    <property type="glycosylation" value="2 sites, No reported glycans"/>
</dbReference>
<dbReference type="GlyGen" id="P37090">
    <property type="glycosylation" value="3 sites"/>
</dbReference>
<dbReference type="iPTMnet" id="P37090"/>
<dbReference type="PhosphoSitePlus" id="P37090"/>
<dbReference type="PaxDb" id="10116-ENSRNOP00000063755"/>
<dbReference type="GeneID" id="24767"/>
<dbReference type="KEGG" id="rno:24767"/>
<dbReference type="UCSC" id="RGD:3640">
    <property type="organism name" value="rat"/>
</dbReference>
<dbReference type="AGR" id="RGD:3640"/>
<dbReference type="CTD" id="6338"/>
<dbReference type="RGD" id="3640">
    <property type="gene designation" value="Scnn1b"/>
</dbReference>
<dbReference type="eggNOG" id="KOG4294">
    <property type="taxonomic scope" value="Eukaryota"/>
</dbReference>
<dbReference type="InParanoid" id="P37090"/>
<dbReference type="OrthoDB" id="6502088at2759"/>
<dbReference type="PhylomeDB" id="P37090"/>
<dbReference type="Reactome" id="R-RNO-2672351">
    <property type="pathway name" value="Stimuli-sensing channels"/>
</dbReference>
<dbReference type="Reactome" id="R-RNO-9730628">
    <property type="pathway name" value="Sensory perception of salty taste"/>
</dbReference>
<dbReference type="EvolutionaryTrace" id="P37090"/>
<dbReference type="PRO" id="PR:P37090"/>
<dbReference type="Proteomes" id="UP000002494">
    <property type="component" value="Unplaced"/>
</dbReference>
<dbReference type="GO" id="GO:0016324">
    <property type="term" value="C:apical plasma membrane"/>
    <property type="evidence" value="ECO:0000314"/>
    <property type="project" value="UniProtKB"/>
</dbReference>
<dbReference type="GO" id="GO:0009986">
    <property type="term" value="C:cell surface"/>
    <property type="evidence" value="ECO:0000314"/>
    <property type="project" value="RGD"/>
</dbReference>
<dbReference type="GO" id="GO:0030659">
    <property type="term" value="C:cytoplasmic vesicle membrane"/>
    <property type="evidence" value="ECO:0007669"/>
    <property type="project" value="UniProtKB-SubCell"/>
</dbReference>
<dbReference type="GO" id="GO:0009897">
    <property type="term" value="C:external side of plasma membrane"/>
    <property type="evidence" value="ECO:0000266"/>
    <property type="project" value="RGD"/>
</dbReference>
<dbReference type="GO" id="GO:0070062">
    <property type="term" value="C:extracellular exosome"/>
    <property type="evidence" value="ECO:0000266"/>
    <property type="project" value="RGD"/>
</dbReference>
<dbReference type="GO" id="GO:0016020">
    <property type="term" value="C:membrane"/>
    <property type="evidence" value="ECO:0000266"/>
    <property type="project" value="RGD"/>
</dbReference>
<dbReference type="GO" id="GO:0005886">
    <property type="term" value="C:plasma membrane"/>
    <property type="evidence" value="ECO:0000250"/>
    <property type="project" value="UniProtKB"/>
</dbReference>
<dbReference type="GO" id="GO:0034706">
    <property type="term" value="C:sodium channel complex"/>
    <property type="evidence" value="ECO:0000353"/>
    <property type="project" value="ComplexPortal"/>
</dbReference>
<dbReference type="GO" id="GO:0015280">
    <property type="term" value="F:ligand-gated sodium channel activity"/>
    <property type="evidence" value="ECO:0000314"/>
    <property type="project" value="RGD"/>
</dbReference>
<dbReference type="GO" id="GO:0050699">
    <property type="term" value="F:WW domain binding"/>
    <property type="evidence" value="ECO:0000314"/>
    <property type="project" value="RGD"/>
</dbReference>
<dbReference type="GO" id="GO:0032341">
    <property type="term" value="P:aldosterone metabolic process"/>
    <property type="evidence" value="ECO:0000266"/>
    <property type="project" value="RGD"/>
</dbReference>
<dbReference type="GO" id="GO:0014824">
    <property type="term" value="P:artery smooth muscle contraction"/>
    <property type="evidence" value="ECO:0000266"/>
    <property type="project" value="RGD"/>
</dbReference>
<dbReference type="GO" id="GO:0071468">
    <property type="term" value="P:cellular response to acidic pH"/>
    <property type="evidence" value="ECO:0000266"/>
    <property type="project" value="RGD"/>
</dbReference>
<dbReference type="GO" id="GO:1904045">
    <property type="term" value="P:cellular response to aldosterone"/>
    <property type="evidence" value="ECO:0000266"/>
    <property type="project" value="RGD"/>
</dbReference>
<dbReference type="GO" id="GO:1904117">
    <property type="term" value="P:cellular response to vasopressin"/>
    <property type="evidence" value="ECO:0000303"/>
    <property type="project" value="ComplexPortal"/>
</dbReference>
<dbReference type="GO" id="GO:0042045">
    <property type="term" value="P:epithelial fluid transport"/>
    <property type="evidence" value="ECO:0000266"/>
    <property type="project" value="RGD"/>
</dbReference>
<dbReference type="GO" id="GO:0034101">
    <property type="term" value="P:erythrocyte homeostasis"/>
    <property type="evidence" value="ECO:0000266"/>
    <property type="project" value="RGD"/>
</dbReference>
<dbReference type="GO" id="GO:0010467">
    <property type="term" value="P:gene expression"/>
    <property type="evidence" value="ECO:0000266"/>
    <property type="project" value="RGD"/>
</dbReference>
<dbReference type="GO" id="GO:0006883">
    <property type="term" value="P:intracellular sodium ion homeostasis"/>
    <property type="evidence" value="ECO:0000314"/>
    <property type="project" value="ComplexPortal"/>
</dbReference>
<dbReference type="GO" id="GO:0002269">
    <property type="term" value="P:leukocyte activation involved in inflammatory response"/>
    <property type="evidence" value="ECO:0000266"/>
    <property type="project" value="RGD"/>
</dbReference>
<dbReference type="GO" id="GO:0070254">
    <property type="term" value="P:mucus secretion"/>
    <property type="evidence" value="ECO:0000266"/>
    <property type="project" value="RGD"/>
</dbReference>
<dbReference type="GO" id="GO:0035264">
    <property type="term" value="P:multicellular organism growth"/>
    <property type="evidence" value="ECO:0000266"/>
    <property type="project" value="RGD"/>
</dbReference>
<dbReference type="GO" id="GO:0050891">
    <property type="term" value="P:multicellular organismal-level water homeostasis"/>
    <property type="evidence" value="ECO:0000250"/>
    <property type="project" value="UniProtKB"/>
</dbReference>
<dbReference type="GO" id="GO:0002283">
    <property type="term" value="P:neutrophil activation involved in immune response"/>
    <property type="evidence" value="ECO:0000266"/>
    <property type="project" value="RGD"/>
</dbReference>
<dbReference type="GO" id="GO:0070944">
    <property type="term" value="P:neutrophil-mediated killing of bacterium"/>
    <property type="evidence" value="ECO:0000266"/>
    <property type="project" value="RGD"/>
</dbReference>
<dbReference type="GO" id="GO:0055075">
    <property type="term" value="P:potassium ion homeostasis"/>
    <property type="evidence" value="ECO:0000266"/>
    <property type="project" value="RGD"/>
</dbReference>
<dbReference type="GO" id="GO:0008217">
    <property type="term" value="P:regulation of blood pressure"/>
    <property type="evidence" value="ECO:0000303"/>
    <property type="project" value="ComplexPortal"/>
</dbReference>
<dbReference type="GO" id="GO:0002028">
    <property type="term" value="P:regulation of sodium ion transport"/>
    <property type="evidence" value="ECO:0000314"/>
    <property type="project" value="RGD"/>
</dbReference>
<dbReference type="GO" id="GO:0003014">
    <property type="term" value="P:renal system process"/>
    <property type="evidence" value="ECO:0000266"/>
    <property type="project" value="RGD"/>
</dbReference>
<dbReference type="GO" id="GO:0032094">
    <property type="term" value="P:response to food"/>
    <property type="evidence" value="ECO:0000266"/>
    <property type="project" value="RGD"/>
</dbReference>
<dbReference type="GO" id="GO:0001666">
    <property type="term" value="P:response to hypoxia"/>
    <property type="evidence" value="ECO:0000270"/>
    <property type="project" value="RGD"/>
</dbReference>
<dbReference type="GO" id="GO:0009410">
    <property type="term" value="P:response to xenobiotic stimulus"/>
    <property type="evidence" value="ECO:0000266"/>
    <property type="project" value="RGD"/>
</dbReference>
<dbReference type="GO" id="GO:0050914">
    <property type="term" value="P:sensory perception of salty taste"/>
    <property type="evidence" value="ECO:0000303"/>
    <property type="project" value="ComplexPortal"/>
</dbReference>
<dbReference type="GO" id="GO:0050915">
    <property type="term" value="P:sensory perception of sour taste"/>
    <property type="evidence" value="ECO:0000303"/>
    <property type="project" value="ComplexPortal"/>
</dbReference>
<dbReference type="GO" id="GO:0055078">
    <property type="term" value="P:sodium ion homeostasis"/>
    <property type="evidence" value="ECO:0000250"/>
    <property type="project" value="UniProtKB"/>
</dbReference>
<dbReference type="GO" id="GO:0098719">
    <property type="term" value="P:sodium ion import across plasma membrane"/>
    <property type="evidence" value="ECO:0000314"/>
    <property type="project" value="RGD"/>
</dbReference>
<dbReference type="GO" id="GO:0035725">
    <property type="term" value="P:sodium ion transmembrane transport"/>
    <property type="evidence" value="ECO:0000266"/>
    <property type="project" value="RGD"/>
</dbReference>
<dbReference type="GO" id="GO:0006814">
    <property type="term" value="P:sodium ion transport"/>
    <property type="evidence" value="ECO:0000314"/>
    <property type="project" value="RGD"/>
</dbReference>
<dbReference type="GO" id="GO:0035313">
    <property type="term" value="P:wound healing, spreading of epidermal cells"/>
    <property type="evidence" value="ECO:0000315"/>
    <property type="project" value="RGD"/>
</dbReference>
<dbReference type="FunFam" id="2.60.470.10:FF:000003">
    <property type="entry name" value="Amiloride-sensitive sodium channel subunit beta"/>
    <property type="match status" value="1"/>
</dbReference>
<dbReference type="FunFam" id="1.10.287.770:FF:000002">
    <property type="entry name" value="Amiloride-sensitive sodium channel subunit beta 1"/>
    <property type="match status" value="1"/>
</dbReference>
<dbReference type="FunFam" id="1.10.287.820:FF:000006">
    <property type="entry name" value="Amiloride-sensitive sodium channel subunit beta-2"/>
    <property type="match status" value="1"/>
</dbReference>
<dbReference type="Gene3D" id="1.10.287.820">
    <property type="entry name" value="Acid-sensing ion channel domain"/>
    <property type="match status" value="1"/>
</dbReference>
<dbReference type="Gene3D" id="2.60.470.10">
    <property type="entry name" value="Acid-sensing ion channels like domains"/>
    <property type="match status" value="1"/>
</dbReference>
<dbReference type="InterPro" id="IPR001873">
    <property type="entry name" value="ENaC"/>
</dbReference>
<dbReference type="InterPro" id="IPR004724">
    <property type="entry name" value="ENaC_chordates"/>
</dbReference>
<dbReference type="InterPro" id="IPR020903">
    <property type="entry name" value="ENaC_CS"/>
</dbReference>
<dbReference type="NCBIfam" id="TIGR00859">
    <property type="entry name" value="ENaC"/>
    <property type="match status" value="1"/>
</dbReference>
<dbReference type="PANTHER" id="PTHR11690:SF18">
    <property type="entry name" value="AMILORIDE-SENSITIVE SODIUM CHANNEL SUBUNIT BETA"/>
    <property type="match status" value="1"/>
</dbReference>
<dbReference type="PANTHER" id="PTHR11690">
    <property type="entry name" value="AMILORIDE-SENSITIVE SODIUM CHANNEL-RELATED"/>
    <property type="match status" value="1"/>
</dbReference>
<dbReference type="Pfam" id="PF00858">
    <property type="entry name" value="ASC"/>
    <property type="match status" value="1"/>
</dbReference>
<dbReference type="PRINTS" id="PR01078">
    <property type="entry name" value="AMINACHANNEL"/>
</dbReference>
<dbReference type="PROSITE" id="PS01206">
    <property type="entry name" value="ASC"/>
    <property type="match status" value="1"/>
</dbReference>
<feature type="chain" id="PRO_0000181271" description="Epithelial sodium channel subunit beta">
    <location>
        <begin position="1"/>
        <end position="638"/>
    </location>
</feature>
<feature type="topological domain" description="Cytoplasmic" evidence="1">
    <location>
        <begin position="1"/>
        <end position="50"/>
    </location>
</feature>
<feature type="transmembrane region" description="Helical; Name=1" evidence="4">
    <location>
        <begin position="51"/>
        <end position="71"/>
    </location>
</feature>
<feature type="topological domain" description="Extracellular" evidence="13">
    <location>
        <begin position="72"/>
        <end position="530"/>
    </location>
</feature>
<feature type="transmembrane region" description="Helical; Name=2" evidence="4">
    <location>
        <begin position="531"/>
        <end position="551"/>
    </location>
</feature>
<feature type="topological domain" description="Cytoplasmic" evidence="1">
    <location>
        <begin position="552"/>
        <end position="638"/>
    </location>
</feature>
<feature type="region of interest" description="Disordered" evidence="5">
    <location>
        <begin position="598"/>
        <end position="620"/>
    </location>
</feature>
<feature type="short sequence motif" description="PY motif; recruits WW domain-containing proteins and is thereby required for ubiquitination and inhibition of the channel by NEDD4 and NEDD4L" evidence="9 12">
    <location>
        <begin position="614"/>
        <end position="618"/>
    </location>
</feature>
<feature type="modified residue" description="Phosphoserine" evidence="3">
    <location>
        <position position="631"/>
    </location>
</feature>
<feature type="modified residue" description="Phosphoserine" evidence="3">
    <location>
        <position position="633"/>
    </location>
</feature>
<feature type="glycosylation site" description="N-linked (GlcNAc...) asparagine" evidence="4">
    <location>
        <position position="135"/>
    </location>
</feature>
<feature type="glycosylation site" description="N-linked (GlcNAc...) asparagine" evidence="4">
    <location>
        <position position="141"/>
    </location>
</feature>
<feature type="disulfide bond" evidence="2">
    <location>
        <begin position="98"/>
        <end position="270"/>
    </location>
</feature>
<feature type="disulfide bond" evidence="2">
    <location>
        <begin position="182"/>
        <end position="187"/>
    </location>
</feature>
<feature type="disulfide bond" evidence="2">
    <location>
        <begin position="194"/>
        <end position="201"/>
    </location>
</feature>
<feature type="disulfide bond" evidence="2">
    <location>
        <begin position="247"/>
        <end position="254"/>
    </location>
</feature>
<feature type="disulfide bond" evidence="2">
    <location>
        <begin position="359"/>
        <end position="446"/>
    </location>
</feature>
<feature type="disulfide bond" evidence="2">
    <location>
        <begin position="384"/>
        <end position="442"/>
    </location>
</feature>
<feature type="disulfide bond" evidence="2">
    <location>
        <begin position="388"/>
        <end position="438"/>
    </location>
</feature>
<feature type="disulfide bond" evidence="2">
    <location>
        <begin position="397"/>
        <end position="424"/>
    </location>
</feature>
<feature type="disulfide bond" evidence="2">
    <location>
        <begin position="399"/>
        <end position="413"/>
    </location>
</feature>
<feature type="mutagenesis site" description="Decreased interaction with NEDD4." evidence="12">
    <original>P</original>
    <variation>A</variation>
    <location>
        <position position="615"/>
    </location>
</feature>
<feature type="mutagenesis site" description="Loss of interaction with NEDD4. Loss of inhibition by NEDD4 and NEDD4L." evidence="9 12">
    <original>P</original>
    <variation>A</variation>
    <location>
        <position position="616"/>
    </location>
</feature>
<feature type="mutagenesis site" description="Loss of interaction with NEDD4. Loss of inhibition by NEDD4 and NEDD4L." evidence="9 12">
    <original>Y</original>
    <variation>A</variation>
    <location>
        <position position="618"/>
    </location>
</feature>
<feature type="mutagenesis site" description="Decreased interaction with NEDD4. Decreased inhibition by NEDD4 and NEDD4L." evidence="9">
    <original>L</original>
    <variation>A</variation>
    <location>
        <position position="621"/>
    </location>
</feature>
<feature type="sequence conflict" description="In Ref. 1; CAA54904." evidence="16" ref="1">
    <original>A</original>
    <variation>R</variation>
    <location>
        <position position="567"/>
    </location>
</feature>
<feature type="sequence conflict" description="In Ref. 1; CAA54904." evidence="16" ref="1">
    <original>FG</original>
    <variation>CV</variation>
    <location>
        <begin position="586"/>
        <end position="587"/>
    </location>
</feature>
<feature type="turn" evidence="19">
    <location>
        <begin position="618"/>
        <end position="620"/>
    </location>
</feature>
<protein>
    <recommendedName>
        <fullName evidence="17">Epithelial sodium channel subunit beta</fullName>
    </recommendedName>
    <alternativeName>
        <fullName>Amiloride-sensitive sodium channel subunit beta</fullName>
    </alternativeName>
    <alternativeName>
        <fullName>Beta-NaCH</fullName>
    </alternativeName>
    <alternativeName>
        <fullName>Epithelial Na(+) channel subunit beta</fullName>
        <shortName>Beta-ENaC</shortName>
    </alternativeName>
    <alternativeName>
        <fullName>Nonvoltage-gated sodium channel 1 subunit beta</fullName>
    </alternativeName>
    <alternativeName>
        <fullName>SCNEB</fullName>
    </alternativeName>
</protein>
<accession>P37090</accession>
<accession>O09183</accession>
<proteinExistence type="evidence at protein level"/>
<evidence type="ECO:0000250" key="1">
    <source>
        <dbReference type="UniProtKB" id="P37089"/>
    </source>
</evidence>
<evidence type="ECO:0000250" key="2">
    <source>
        <dbReference type="UniProtKB" id="P51168"/>
    </source>
</evidence>
<evidence type="ECO:0000250" key="3">
    <source>
        <dbReference type="UniProtKB" id="Q9WU38"/>
    </source>
</evidence>
<evidence type="ECO:0000255" key="4"/>
<evidence type="ECO:0000256" key="5">
    <source>
        <dbReference type="SAM" id="MobiDB-lite"/>
    </source>
</evidence>
<evidence type="ECO:0000269" key="6">
    <source>
    </source>
</evidence>
<evidence type="ECO:0000269" key="7">
    <source>
    </source>
</evidence>
<evidence type="ECO:0000269" key="8">
    <source>
    </source>
</evidence>
<evidence type="ECO:0000269" key="9">
    <source>
    </source>
</evidence>
<evidence type="ECO:0000269" key="10">
    <source>
    </source>
</evidence>
<evidence type="ECO:0000269" key="11">
    <source>
    </source>
</evidence>
<evidence type="ECO:0000269" key="12">
    <source>
    </source>
</evidence>
<evidence type="ECO:0000269" key="13">
    <source>
    </source>
</evidence>
<evidence type="ECO:0000269" key="14">
    <source>
    </source>
</evidence>
<evidence type="ECO:0000269" key="15">
    <source>
    </source>
</evidence>
<evidence type="ECO:0000305" key="16"/>
<evidence type="ECO:0000305" key="17">
    <source>
    </source>
</evidence>
<evidence type="ECO:0000312" key="18">
    <source>
        <dbReference type="RGD" id="3640"/>
    </source>
</evidence>
<evidence type="ECO:0007829" key="19">
    <source>
        <dbReference type="PDB" id="1I5H"/>
    </source>
</evidence>
<keyword id="KW-0002">3D-structure</keyword>
<keyword id="KW-1003">Cell membrane</keyword>
<keyword id="KW-0968">Cytoplasmic vesicle</keyword>
<keyword id="KW-1015">Disulfide bond</keyword>
<keyword id="KW-0325">Glycoprotein</keyword>
<keyword id="KW-0407">Ion channel</keyword>
<keyword id="KW-0406">Ion transport</keyword>
<keyword id="KW-0472">Membrane</keyword>
<keyword id="KW-0597">Phosphoprotein</keyword>
<keyword id="KW-1185">Reference proteome</keyword>
<keyword id="KW-0915">Sodium</keyword>
<keyword id="KW-0894">Sodium channel</keyword>
<keyword id="KW-0739">Sodium transport</keyword>
<keyword id="KW-0812">Transmembrane</keyword>
<keyword id="KW-1133">Transmembrane helix</keyword>
<keyword id="KW-0813">Transport</keyword>
<keyword id="KW-0832">Ubl conjugation</keyword>
<name>SCNNB_RAT</name>
<reference key="1">
    <citation type="journal article" date="1994" name="Nature">
        <title>Amiloride-sensitive epithelial Na+ channel is made of three homologous subunits.</title>
        <authorList>
            <person name="Canessa C.M."/>
            <person name="Schild L."/>
            <person name="Buell G."/>
            <person name="Thorens B."/>
            <person name="Gautschi I."/>
            <person name="Horisberger J.-D."/>
            <person name="Rossier B.C."/>
        </authorList>
    </citation>
    <scope>NUCLEOTIDE SEQUENCE [MRNA]</scope>
    <scope>FUNCTION</scope>
    <scope>TRANSPORTER ACTIVITY</scope>
    <scope>ACTIVITY REGULATION</scope>
    <source>
        <strain>Sprague-Dawley</strain>
        <tissue>Distal colon epithelium</tissue>
    </source>
</reference>
<reference key="2">
    <citation type="journal article" date="1996" name="EMBO J.">
        <title>WW domains of Nedd4 bind to the proline-rich PY motifs in the epithelial Na+ channel deleted in Liddle's syndrome.</title>
        <authorList>
            <person name="Staub O."/>
            <person name="Dho S."/>
            <person name="Henry P."/>
            <person name="Correa J."/>
            <person name="Ishikawa T."/>
            <person name="McGlade J."/>
            <person name="Rotin D."/>
        </authorList>
    </citation>
    <scope>UBIQUITINATION BY NEDD4 AND NEDD4L</scope>
    <scope>MUTAGENESIS OF PRO-616 AND TYR-618</scope>
    <scope>MOTIF</scope>
</reference>
<reference key="3">
    <citation type="journal article" date="1997" name="EMBO J.">
        <title>Regulation of stability and function of the epithelial Na+ channel (ENaC) by ubiquitination.</title>
        <authorList>
            <person name="Staub O."/>
            <person name="Gautschi I."/>
            <person name="Ishikawa T."/>
            <person name="Breitschopf K."/>
            <person name="Ciechanover A."/>
            <person name="Schild L."/>
            <person name="Rotin D."/>
        </authorList>
    </citation>
    <scope>UBIQUITINATION</scope>
</reference>
<reference key="4">
    <citation type="journal article" date="1997" name="Hypertension">
        <title>Role of the alpha-, beta-, and gamma-subunits of epithelial sodium channel in a model of polygenic hypertension.</title>
        <authorList>
            <person name="Kreutz R."/>
            <person name="Struk B."/>
            <person name="Rubattu S."/>
            <person name="Hubner N."/>
            <person name="Szpirer J."/>
            <person name="Szpirer C."/>
            <person name="Ganten D."/>
            <person name="Lindpaintner K."/>
        </authorList>
    </citation>
    <scope>NUCLEOTIDE SEQUENCE [MRNA]</scope>
    <source>
        <tissue>Kidney</tissue>
    </source>
</reference>
<reference key="5">
    <citation type="journal article" date="1997" name="EMBO J.">
        <title>A mutation causing pseudohypoaldosteronism type 1 identifies a conserved glycine that is involved in the gating of the epithelial sodium channel.</title>
        <authorList>
            <person name="Gruender S."/>
            <person name="Firsov D."/>
            <person name="Chang S.S."/>
            <person name="Jaeger N.F."/>
            <person name="Gautschi I."/>
            <person name="Schild L."/>
            <person name="Lifton R.P."/>
            <person name="Rossier B.C."/>
        </authorList>
    </citation>
    <scope>FUNCTION</scope>
    <scope>TRANSPORTER ACTIVITY</scope>
    <scope>ACTIVITY REGULATION</scope>
    <scope>INTERACTION WITH SCNN1A AND SCNN1G</scope>
    <scope>SUBCELLULAR LOCATION</scope>
    <scope>TOPOLOGY</scope>
</reference>
<reference key="6">
    <citation type="journal article" date="1998" name="Proc. Natl. Acad. Sci. U.S.A.">
        <title>In vivo phosphorylation of the epithelial sodium channel.</title>
        <authorList>
            <person name="Shimkets R.A."/>
            <person name="Lifton R."/>
            <person name="Canessa C.M."/>
        </authorList>
    </citation>
    <scope>PHOSPHORYLATION</scope>
</reference>
<reference key="7">
    <citation type="journal article" date="2001" name="Am. J. Physiol.">
        <title>Immunocytochemical and immunoelectron microscopic localization of alpha-, beta-, and gamma-ENaC in rat kidney.</title>
        <authorList>
            <person name="Hager H."/>
            <person name="Kwon T.H."/>
            <person name="Vinnikova A.K."/>
            <person name="Masilamani S."/>
            <person name="Brooks H.L."/>
            <person name="Frokiaer J."/>
            <person name="Knepper M.A."/>
            <person name="Nielsen S."/>
        </authorList>
    </citation>
    <scope>FUNCTION</scope>
    <scope>SUBCELLULAR LOCATION</scope>
</reference>
<reference key="8">
    <citation type="journal article" date="2002" name="J. Biol. Chem.">
        <title>Trafficking and cell surface stability of the epithelial Na+ channel expressed in epithelial Madin-Darby canine kidney cells.</title>
        <authorList>
            <person name="Hanwell D."/>
            <person name="Ishikawa T."/>
            <person name="Saleki R."/>
            <person name="Rotin D."/>
        </authorList>
    </citation>
    <scope>FUNCTION</scope>
    <scope>SUBCELLULAR LOCATION</scope>
    <scope>GLYCOSYLATION</scope>
</reference>
<reference key="9">
    <citation type="journal article" date="2003" name="J. Biol. Chem.">
        <title>Affinity and specificity of interactions between Nedd4 isoforms and ENaC.</title>
        <authorList>
            <person name="Henry P.C."/>
            <person name="Kanelis V."/>
            <person name="O'Brien C.M."/>
            <person name="Kim B."/>
            <person name="Gautschi I."/>
            <person name="Forman-Kay J.D."/>
            <person name="Schild L."/>
            <person name="Rotin D."/>
        </authorList>
    </citation>
    <scope>UBIQUITINATION BY NEDD4 AND NEDD4L</scope>
    <scope>MUTAGENESIS OF PRO-615; PRO-616; TYR-618 AND LEU-621</scope>
    <scope>MOTIF</scope>
</reference>
<reference key="10">
    <citation type="journal article" date="2019" name="J. Mol. Histol.">
        <title>Mapping the sites of localization of epithelial sodium channel (ENaC) and CFTR in segments of the mammalian epididymis.</title>
        <authorList>
            <person name="Sharma S."/>
            <person name="Hanukoglu I."/>
        </authorList>
    </citation>
    <scope>TISSUE SPECIFICITY</scope>
</reference>
<reference key="11">
    <citation type="journal article" date="2001" name="Nat. Struct. Biol.">
        <title>Solution structure of a Nedd4 WW domain-ENaC peptide complex.</title>
        <authorList>
            <person name="Kanelis V."/>
            <person name="Rotin D."/>
            <person name="Forman-Kay J.D."/>
        </authorList>
    </citation>
    <scope>STRUCTURE BY NMR OF 607-621 IN COMPLEX WITH NEDD4</scope>
    <scope>UBIQUITINATION BY NEDD4</scope>
</reference>
<sequence length="638" mass="71995">MPVKKYLLKCLHRLQKGPGYTYKELLVWYCNNTNTHGPKRIICEGPKKKAMWFLLTLLFACLVCWQWGVFIQTYLSWEVSVSLSMGFKTMNFPAVTVCNSSPFQYSKVKHLLKDLYKLMEAVLDKILAPKSSHTNTTSTLNFTIWNHTPLVLIDERNPDHPVVLNLFGDSHNSSNPAPGSTCNAQGCKVAMRLCSANGTVCTFRNFTSATQAVTEWYILQATNIFSQVLPQDLVGMGYAPDRIILACLFGTEPCSHRNFTPIFYPDYGNCYIFNWGMTEKALPSANPGTEFGLKLILDIGQEDYVPFLASTAGARLMLHEQRTYPFIREEGIYAMAGTETSIGVLLDKLQGKGEPYSPCTMNGSDVAIQNLYSDYNTTYSIQACLHSCFQDHMIHNCSCGHYLYPLPAGEKYCNNRDFPDWAYCYLSLQMSVVQRETCLSMCKESCNDTQYKMTISMADWPSEASEDWILHVLSQERDQSSNITLSRKGIVKLNIYFQEFNYRTIEESPANNIVWLLSNLGGQFGFWMGGSVLCLIEFGEIIIDFIWITVIKLVASCKGLRRRRPQAPYTGPPPTVAELVEAHTNFGFQPDTTSCRPNAEVYPDQQTLPIPGTPPPNYDSLRLQPLDTMESDSEVEAI</sequence>
<organism>
    <name type="scientific">Rattus norvegicus</name>
    <name type="common">Rat</name>
    <dbReference type="NCBI Taxonomy" id="10116"/>
    <lineage>
        <taxon>Eukaryota</taxon>
        <taxon>Metazoa</taxon>
        <taxon>Chordata</taxon>
        <taxon>Craniata</taxon>
        <taxon>Vertebrata</taxon>
        <taxon>Euteleostomi</taxon>
        <taxon>Mammalia</taxon>
        <taxon>Eutheria</taxon>
        <taxon>Euarchontoglires</taxon>
        <taxon>Glires</taxon>
        <taxon>Rodentia</taxon>
        <taxon>Myomorpha</taxon>
        <taxon>Muroidea</taxon>
        <taxon>Muridae</taxon>
        <taxon>Murinae</taxon>
        <taxon>Rattus</taxon>
    </lineage>
</organism>
<comment type="function">
    <text evidence="3 7 8 11 13">This is one of the three pore-forming subunits of the heterotrimeric epithelial sodium channel (ENaC), a critical regulator of sodium balance and fluid homeostasis (PubMed:8107805, PubMed:9118951). ENaC operates in epithelial tissues, where it mediates the electrodiffusion of sodium ions from extracellular fluid through the apical membrane of cells, with water following osmotically (PubMed:11352848, PubMed:11773057, PubMed:9118951). It plays a key role in maintaining sodium homeostasis through electrogenic sodium reabsorption in the kidneys (By similarity). This subunit is not essential for ENaC function in airway surface liquid homeostasis and proper mucus clearance (By similarity).</text>
</comment>
<comment type="catalytic activity">
    <reaction evidence="11">
        <text>Na(+)(in) = Na(+)(out)</text>
        <dbReference type="Rhea" id="RHEA:34963"/>
        <dbReference type="ChEBI" id="CHEBI:29101"/>
    </reaction>
</comment>
<comment type="activity regulation">
    <text evidence="11">Originally identified and characterized by its inhibition by the diuretic drug amiloride.</text>
</comment>
<comment type="subunit">
    <text evidence="2 13">Component of the heterotrimeric epithelial sodium channel (ENaC) composed of an alpha/SCNN1A, a beta/SCNN1B and a gamma/SCNN1G subunit (PubMed:9118951). Interacts with WWP1 (via WW domains) (By similarity). Interacts with WWP2 (via WW domains) (By similarity). Interacts with the full-length immature form of PCSK9 (pro-PCSK9) (By similarity). Interacts (N-glycosylated) with BPIFA1; the interaction is direct and inhibits the proteolytic processing of SCNN1A and SCNN1G and the activation of ENaC (By similarity).</text>
</comment>
<comment type="subcellular location">
    <subcellularLocation>
        <location evidence="7 8 13">Apical cell membrane</location>
        <topology evidence="1">Multi-pass membrane protein</topology>
    </subcellularLocation>
    <subcellularLocation>
        <location evidence="7 8">Cytoplasmic vesicle membrane</location>
        <topology evidence="1">Multi-pass membrane protein</topology>
    </subcellularLocation>
</comment>
<comment type="tissue specificity">
    <text evidence="10">Expressed in lung and epididymis (PubMed:30659401). In the caput region of the epididymis, expressed at the luminal and basolateral surfaces of the ducts and in the smooth muscle coat (PubMed:30659401). In the caudal region of the epididymis, expressed along the luminal border but not continuously, in the smooth muscle coat, in the interstitial muscle tissue and in sperm in the caudal lumen (PubMed:30659401).</text>
</comment>
<comment type="PTM">
    <text evidence="6 9 12 14">Ubiquitinated. Can be ubiquitinated at multiple sites and undergo monoubiquitination and polyubiquitination. Ubiquitination by NEDD4 or NEDD4L inhibits the ENaC channel through endocytosis, intracellular retention and degradation of its individual subunits (PubMed:11323714, PubMed:12654927, PubMed:8665844). However, some studies could not confirm the ubiquitination of this subunit of the ENaC (PubMed:9351815).</text>
</comment>
<comment type="PTM">
    <text evidence="2 8">N-glycosylated (PubMed:11773057). N-glycosylation is required for interaction with BPIFA1 (By similarity).</text>
</comment>
<comment type="PTM">
    <text evidence="15">Phosphorylated on serine and threonine residues. Aldosterone and insulin increase the basal level of phosphorylation.</text>
</comment>
<comment type="similarity">
    <text evidence="16">Belongs to the amiloride-sensitive sodium channel (TC 1.A.6) family. SCNN1B subfamily.</text>
</comment>